<proteinExistence type="inferred from homology"/>
<dbReference type="EC" id="2.4.1.227" evidence="1"/>
<dbReference type="EMBL" id="AL157959">
    <property type="protein sequence ID" value="CAM09165.1"/>
    <property type="molecule type" value="Genomic_DNA"/>
</dbReference>
<dbReference type="PIR" id="B81777">
    <property type="entry name" value="B81777"/>
</dbReference>
<dbReference type="RefSeq" id="WP_002245894.1">
    <property type="nucleotide sequence ID" value="NC_003116.1"/>
</dbReference>
<dbReference type="SMR" id="Q9JSZ7"/>
<dbReference type="CAZy" id="GT28">
    <property type="family name" value="Glycosyltransferase Family 28"/>
</dbReference>
<dbReference type="EnsemblBacteria" id="CAM09165">
    <property type="protein sequence ID" value="CAM09165"/>
    <property type="gene ID" value="NMA2062"/>
</dbReference>
<dbReference type="GeneID" id="93387519"/>
<dbReference type="KEGG" id="nma:NMA2062"/>
<dbReference type="HOGENOM" id="CLU_037404_2_0_4"/>
<dbReference type="UniPathway" id="UPA00219"/>
<dbReference type="Proteomes" id="UP000000626">
    <property type="component" value="Chromosome"/>
</dbReference>
<dbReference type="GO" id="GO:0005886">
    <property type="term" value="C:plasma membrane"/>
    <property type="evidence" value="ECO:0007669"/>
    <property type="project" value="UniProtKB-SubCell"/>
</dbReference>
<dbReference type="GO" id="GO:0051991">
    <property type="term" value="F:UDP-N-acetyl-D-glucosamine:N-acetylmuramoyl-L-alanyl-D-glutamyl-meso-2,6-diaminopimelyl-D-alanyl-D-alanine-diphosphoundecaprenol 4-beta-N-acetylglucosaminlytransferase activity"/>
    <property type="evidence" value="ECO:0007669"/>
    <property type="project" value="RHEA"/>
</dbReference>
<dbReference type="GO" id="GO:0050511">
    <property type="term" value="F:undecaprenyldiphospho-muramoylpentapeptide beta-N-acetylglucosaminyltransferase activity"/>
    <property type="evidence" value="ECO:0007669"/>
    <property type="project" value="UniProtKB-UniRule"/>
</dbReference>
<dbReference type="GO" id="GO:0005975">
    <property type="term" value="P:carbohydrate metabolic process"/>
    <property type="evidence" value="ECO:0007669"/>
    <property type="project" value="InterPro"/>
</dbReference>
<dbReference type="GO" id="GO:0051301">
    <property type="term" value="P:cell division"/>
    <property type="evidence" value="ECO:0007669"/>
    <property type="project" value="UniProtKB-KW"/>
</dbReference>
<dbReference type="GO" id="GO:0071555">
    <property type="term" value="P:cell wall organization"/>
    <property type="evidence" value="ECO:0007669"/>
    <property type="project" value="UniProtKB-KW"/>
</dbReference>
<dbReference type="GO" id="GO:0030259">
    <property type="term" value="P:lipid glycosylation"/>
    <property type="evidence" value="ECO:0007669"/>
    <property type="project" value="UniProtKB-UniRule"/>
</dbReference>
<dbReference type="GO" id="GO:0009252">
    <property type="term" value="P:peptidoglycan biosynthetic process"/>
    <property type="evidence" value="ECO:0007669"/>
    <property type="project" value="UniProtKB-UniRule"/>
</dbReference>
<dbReference type="GO" id="GO:0008360">
    <property type="term" value="P:regulation of cell shape"/>
    <property type="evidence" value="ECO:0007669"/>
    <property type="project" value="UniProtKB-KW"/>
</dbReference>
<dbReference type="CDD" id="cd03785">
    <property type="entry name" value="GT28_MurG"/>
    <property type="match status" value="1"/>
</dbReference>
<dbReference type="Gene3D" id="3.40.50.2000">
    <property type="entry name" value="Glycogen Phosphorylase B"/>
    <property type="match status" value="2"/>
</dbReference>
<dbReference type="HAMAP" id="MF_00033">
    <property type="entry name" value="MurG"/>
    <property type="match status" value="1"/>
</dbReference>
<dbReference type="InterPro" id="IPR006009">
    <property type="entry name" value="GlcNAc_MurG"/>
</dbReference>
<dbReference type="InterPro" id="IPR007235">
    <property type="entry name" value="Glyco_trans_28_C"/>
</dbReference>
<dbReference type="InterPro" id="IPR004276">
    <property type="entry name" value="GlycoTrans_28_N"/>
</dbReference>
<dbReference type="NCBIfam" id="TIGR01133">
    <property type="entry name" value="murG"/>
    <property type="match status" value="1"/>
</dbReference>
<dbReference type="PANTHER" id="PTHR21015:SF22">
    <property type="entry name" value="GLYCOSYLTRANSFERASE"/>
    <property type="match status" value="1"/>
</dbReference>
<dbReference type="PANTHER" id="PTHR21015">
    <property type="entry name" value="UDP-N-ACETYLGLUCOSAMINE--N-ACETYLMURAMYL-(PENTAPEPTIDE) PYROPHOSPHORYL-UNDECAPRENOL N-ACETYLGLUCOSAMINE TRANSFERASE 1"/>
    <property type="match status" value="1"/>
</dbReference>
<dbReference type="Pfam" id="PF04101">
    <property type="entry name" value="Glyco_tran_28_C"/>
    <property type="match status" value="1"/>
</dbReference>
<dbReference type="Pfam" id="PF03033">
    <property type="entry name" value="Glyco_transf_28"/>
    <property type="match status" value="1"/>
</dbReference>
<dbReference type="SUPFAM" id="SSF53756">
    <property type="entry name" value="UDP-Glycosyltransferase/glycogen phosphorylase"/>
    <property type="match status" value="1"/>
</dbReference>
<organism>
    <name type="scientific">Neisseria meningitidis serogroup A / serotype 4A (strain DSM 15465 / Z2491)</name>
    <dbReference type="NCBI Taxonomy" id="122587"/>
    <lineage>
        <taxon>Bacteria</taxon>
        <taxon>Pseudomonadati</taxon>
        <taxon>Pseudomonadota</taxon>
        <taxon>Betaproteobacteria</taxon>
        <taxon>Neisseriales</taxon>
        <taxon>Neisseriaceae</taxon>
        <taxon>Neisseria</taxon>
    </lineage>
</organism>
<gene>
    <name evidence="1" type="primary">murG</name>
    <name type="ordered locus">NMA2062</name>
</gene>
<evidence type="ECO:0000255" key="1">
    <source>
        <dbReference type="HAMAP-Rule" id="MF_00033"/>
    </source>
</evidence>
<name>MURG_NEIMA</name>
<reference key="1">
    <citation type="journal article" date="2000" name="Nature">
        <title>Complete DNA sequence of a serogroup A strain of Neisseria meningitidis Z2491.</title>
        <authorList>
            <person name="Parkhill J."/>
            <person name="Achtman M."/>
            <person name="James K.D."/>
            <person name="Bentley S.D."/>
            <person name="Churcher C.M."/>
            <person name="Klee S.R."/>
            <person name="Morelli G."/>
            <person name="Basham D."/>
            <person name="Brown D."/>
            <person name="Chillingworth T."/>
            <person name="Davies R.M."/>
            <person name="Davis P."/>
            <person name="Devlin K."/>
            <person name="Feltwell T."/>
            <person name="Hamlin N."/>
            <person name="Holroyd S."/>
            <person name="Jagels K."/>
            <person name="Leather S."/>
            <person name="Moule S."/>
            <person name="Mungall K.L."/>
            <person name="Quail M.A."/>
            <person name="Rajandream M.A."/>
            <person name="Rutherford K.M."/>
            <person name="Simmonds M."/>
            <person name="Skelton J."/>
            <person name="Whitehead S."/>
            <person name="Spratt B.G."/>
            <person name="Barrell B.G."/>
        </authorList>
    </citation>
    <scope>NUCLEOTIDE SEQUENCE [LARGE SCALE GENOMIC DNA]</scope>
    <source>
        <strain>DSM 15465 / Z2491</strain>
    </source>
</reference>
<feature type="chain" id="PRO_0000109190" description="UDP-N-acetylglucosamine--N-acetylmuramyl-(pentapeptide) pyrophosphoryl-undecaprenol N-acetylglucosamine transferase">
    <location>
        <begin position="1"/>
        <end position="355"/>
    </location>
</feature>
<feature type="binding site" evidence="1">
    <location>
        <begin position="13"/>
        <end position="15"/>
    </location>
    <ligand>
        <name>UDP-N-acetyl-alpha-D-glucosamine</name>
        <dbReference type="ChEBI" id="CHEBI:57705"/>
    </ligand>
</feature>
<feature type="binding site" evidence="1">
    <location>
        <position position="125"/>
    </location>
    <ligand>
        <name>UDP-N-acetyl-alpha-D-glucosamine</name>
        <dbReference type="ChEBI" id="CHEBI:57705"/>
    </ligand>
</feature>
<feature type="binding site" evidence="1">
    <location>
        <position position="162"/>
    </location>
    <ligand>
        <name>UDP-N-acetyl-alpha-D-glucosamine</name>
        <dbReference type="ChEBI" id="CHEBI:57705"/>
    </ligand>
</feature>
<feature type="binding site" evidence="1">
    <location>
        <position position="190"/>
    </location>
    <ligand>
        <name>UDP-N-acetyl-alpha-D-glucosamine</name>
        <dbReference type="ChEBI" id="CHEBI:57705"/>
    </ligand>
</feature>
<feature type="binding site" evidence="1">
    <location>
        <position position="244"/>
    </location>
    <ligand>
        <name>UDP-N-acetyl-alpha-D-glucosamine</name>
        <dbReference type="ChEBI" id="CHEBI:57705"/>
    </ligand>
</feature>
<feature type="binding site" evidence="1">
    <location>
        <position position="289"/>
    </location>
    <ligand>
        <name>UDP-N-acetyl-alpha-D-glucosamine</name>
        <dbReference type="ChEBI" id="CHEBI:57705"/>
    </ligand>
</feature>
<keyword id="KW-0131">Cell cycle</keyword>
<keyword id="KW-0132">Cell division</keyword>
<keyword id="KW-0997">Cell inner membrane</keyword>
<keyword id="KW-1003">Cell membrane</keyword>
<keyword id="KW-0133">Cell shape</keyword>
<keyword id="KW-0961">Cell wall biogenesis/degradation</keyword>
<keyword id="KW-0328">Glycosyltransferase</keyword>
<keyword id="KW-0472">Membrane</keyword>
<keyword id="KW-0573">Peptidoglycan synthesis</keyword>
<keyword id="KW-0808">Transferase</keyword>
<accession>Q9JSZ7</accession>
<accession>A1ITP8</accession>
<protein>
    <recommendedName>
        <fullName evidence="1">UDP-N-acetylglucosamine--N-acetylmuramyl-(pentapeptide) pyrophosphoryl-undecaprenol N-acetylglucosamine transferase</fullName>
        <ecNumber evidence="1">2.4.1.227</ecNumber>
    </recommendedName>
    <alternativeName>
        <fullName evidence="1">Undecaprenyl-PP-MurNAc-pentapeptide-UDPGlcNAc GlcNAc transferase</fullName>
    </alternativeName>
</protein>
<sequence length="355" mass="38056">MGGKTFMLMAGGTGGHIFPALAVADSLRARGHHVIWLGSKDSMEERIVPQYDILLETLAIKGVRGNGIKRKLMLPFTLYQTVREAQQIIRKHRVECVIGFGGFVTFPGGLAAKLLGVPIVIHEQNAVAGLSNRHLSRWAKRVLYAFPKAFSHEGGLVGNPVRADISNLPVPAERFQGREGRLKILVVGGSLGADVLNKTVPQALALLPDNARPQMYHQSGRGKLGSLQADYDALGVQAECVEFITDMVSAYRDADLVICRAGALTIAELTAAGLGALLVPYPHAVDDHQTANARFMVQAEAGLLLPQTQLTAEKLAEILGGLNREKCLKWAENARTLALPHSADDVAEAAIACAA</sequence>
<comment type="function">
    <text evidence="1">Cell wall formation. Catalyzes the transfer of a GlcNAc subunit on undecaprenyl-pyrophosphoryl-MurNAc-pentapeptide (lipid intermediate I) to form undecaprenyl-pyrophosphoryl-MurNAc-(pentapeptide)GlcNAc (lipid intermediate II).</text>
</comment>
<comment type="catalytic activity">
    <reaction evidence="1">
        <text>di-trans,octa-cis-undecaprenyl diphospho-N-acetyl-alpha-D-muramoyl-L-alanyl-D-glutamyl-meso-2,6-diaminopimeloyl-D-alanyl-D-alanine + UDP-N-acetyl-alpha-D-glucosamine = di-trans,octa-cis-undecaprenyl diphospho-[N-acetyl-alpha-D-glucosaminyl-(1-&gt;4)]-N-acetyl-alpha-D-muramoyl-L-alanyl-D-glutamyl-meso-2,6-diaminopimeloyl-D-alanyl-D-alanine + UDP + H(+)</text>
        <dbReference type="Rhea" id="RHEA:31227"/>
        <dbReference type="ChEBI" id="CHEBI:15378"/>
        <dbReference type="ChEBI" id="CHEBI:57705"/>
        <dbReference type="ChEBI" id="CHEBI:58223"/>
        <dbReference type="ChEBI" id="CHEBI:61387"/>
        <dbReference type="ChEBI" id="CHEBI:61388"/>
        <dbReference type="EC" id="2.4.1.227"/>
    </reaction>
</comment>
<comment type="pathway">
    <text evidence="1">Cell wall biogenesis; peptidoglycan biosynthesis.</text>
</comment>
<comment type="subcellular location">
    <subcellularLocation>
        <location evidence="1">Cell inner membrane</location>
        <topology evidence="1">Peripheral membrane protein</topology>
        <orientation evidence="1">Cytoplasmic side</orientation>
    </subcellularLocation>
</comment>
<comment type="similarity">
    <text evidence="1">Belongs to the glycosyltransferase 28 family. MurG subfamily.</text>
</comment>